<feature type="chain" id="PRO_0000439582" description="Structural maintenance of chromosomes protein 5">
    <location>
        <begin position="1"/>
        <end position="1076"/>
    </location>
</feature>
<feature type="region of interest" description="Disordered" evidence="3">
    <location>
        <begin position="375"/>
        <end position="420"/>
    </location>
</feature>
<feature type="region of interest" description="Flexible hinge" evidence="8">
    <location>
        <begin position="416"/>
        <end position="617"/>
    </location>
</feature>
<feature type="coiled-coil region" evidence="1">
    <location>
        <begin position="190"/>
        <end position="415"/>
    </location>
</feature>
<feature type="coiled-coil region" evidence="1">
    <location>
        <begin position="627"/>
        <end position="713"/>
    </location>
</feature>
<feature type="coiled-coil region" evidence="1">
    <location>
        <begin position="749"/>
        <end position="786"/>
    </location>
</feature>
<feature type="compositionally biased region" description="Basic and acidic residues" evidence="3">
    <location>
        <begin position="375"/>
        <end position="410"/>
    </location>
</feature>
<feature type="binding site" evidence="2">
    <location>
        <begin position="49"/>
        <end position="56"/>
    </location>
    <ligand>
        <name>ATP</name>
        <dbReference type="ChEBI" id="CHEBI:30616"/>
    </ligand>
</feature>
<feature type="mutagenesis site" description="In sbj2; hypersensitive to UVB irradiation." evidence="5">
    <original>G</original>
    <variation>R</variation>
    <location>
        <position position="965"/>
    </location>
</feature>
<reference evidence="9" key="1">
    <citation type="journal article" date="1998" name="Science">
        <title>Genome sequence of the nematode C. elegans: a platform for investigating biology.</title>
        <authorList>
            <consortium name="The C. elegans sequencing consortium"/>
        </authorList>
    </citation>
    <scope>NUCLEOTIDE SEQUENCE [LARGE SCALE GENOMIC DNA]</scope>
    <source>
        <strain evidence="9">Bristol N2</strain>
    </source>
</reference>
<reference evidence="8" key="2">
    <citation type="journal article" date="2010" name="PLoS Genet.">
        <title>Structural maintenance of chromosomes (SMC) proteins promote homolog-independent recombination repair in meiosis crucial for germ cell genomic stability.</title>
        <authorList>
            <person name="Bickel J.S."/>
            <person name="Chen L."/>
            <person name="Hayward J."/>
            <person name="Yeap S.L."/>
            <person name="Alkers A.E."/>
            <person name="Chan R.C."/>
        </authorList>
    </citation>
    <scope>FUNCTION</scope>
    <scope>INTERACTION WITH SMC-6</scope>
    <scope>SUBCELLULAR LOCATION</scope>
    <scope>TISSUE SPECIFICITY</scope>
    <scope>DISRUPTION PHENOTYPE</scope>
</reference>
<reference evidence="8" key="3">
    <citation type="journal article" date="2014" name="Genetics">
        <title>Loss of Caenorhabditis elegans BRCA1 promotes genome stability during replication in smc-5 mutants.</title>
        <authorList>
            <person name="Wolters S."/>
            <person name="Ermolaeva M.A."/>
            <person name="Bickel J.S."/>
            <person name="Fingerhut J.M."/>
            <person name="Khanikar J."/>
            <person name="Chan R.C."/>
            <person name="Schumacher B."/>
        </authorList>
    </citation>
    <scope>FUNCTION</scope>
    <scope>DISRUPTION PHENOTYPE</scope>
    <scope>MUTAGENESIS OF GLY-965</scope>
</reference>
<reference evidence="8" key="4">
    <citation type="journal article" date="2016" name="PLoS Biol.">
        <title>Separable roles for a Caenorhabditis elegans RMI1 homolog in promoting and antagonizing meiotic crossovers ensure faithful chromosome inheritance.</title>
        <authorList>
            <person name="Jagut M."/>
            <person name="Hamminger P."/>
            <person name="Woglar A."/>
            <person name="Millonigg S."/>
            <person name="Paulin L."/>
            <person name="Mikl M."/>
            <person name="Dello Stritto M.R."/>
            <person name="Tang L."/>
            <person name="Habacher C."/>
            <person name="Tam A."/>
            <person name="Gallach M."/>
            <person name="von Haeseler A."/>
            <person name="Villeneuve A.M."/>
            <person name="Jantsch V."/>
        </authorList>
    </citation>
    <scope>FUNCTION</scope>
    <scope>DISRUPTION PHENOTYPE</scope>
</reference>
<reference evidence="8" key="5">
    <citation type="journal article" date="2016" name="PLoS Genet.">
        <title>The SMC-5/6 complex and the HIM-6 (BLM) helicase synergistically promote meiotic recombination intermediate processing and chromosome maturation during Caenorhabditis elegans meiosis.</title>
        <authorList>
            <person name="Hong Y."/>
            <person name="Sonneville R."/>
            <person name="Agostinho A."/>
            <person name="Meier B."/>
            <person name="Wang B."/>
            <person name="Blow J.J."/>
            <person name="Gartner A."/>
        </authorList>
    </citation>
    <scope>FUNCTION</scope>
    <scope>DISRUPTION PHENOTYPE</scope>
</reference>
<keyword id="KW-0067">ATP-binding</keyword>
<keyword id="KW-0158">Chromosome</keyword>
<keyword id="KW-0175">Coiled coil</keyword>
<keyword id="KW-0227">DNA damage</keyword>
<keyword id="KW-0233">DNA recombination</keyword>
<keyword id="KW-0234">DNA repair</keyword>
<keyword id="KW-0235">DNA replication</keyword>
<keyword id="KW-0469">Meiosis</keyword>
<keyword id="KW-0547">Nucleotide-binding</keyword>
<keyword id="KW-0539">Nucleus</keyword>
<keyword id="KW-1185">Reference proteome</keyword>
<evidence type="ECO:0000255" key="1"/>
<evidence type="ECO:0000255" key="2">
    <source>
        <dbReference type="PROSITE-ProRule" id="PRU00499"/>
    </source>
</evidence>
<evidence type="ECO:0000256" key="3">
    <source>
        <dbReference type="SAM" id="MobiDB-lite"/>
    </source>
</evidence>
<evidence type="ECO:0000269" key="4">
    <source>
    </source>
</evidence>
<evidence type="ECO:0000269" key="5">
    <source>
    </source>
</evidence>
<evidence type="ECO:0000269" key="6">
    <source>
    </source>
</evidence>
<evidence type="ECO:0000269" key="7">
    <source>
    </source>
</evidence>
<evidence type="ECO:0000305" key="8"/>
<evidence type="ECO:0000312" key="9">
    <source>
        <dbReference type="Proteomes" id="UP000001940"/>
    </source>
</evidence>
<evidence type="ECO:0000312" key="10">
    <source>
        <dbReference type="WormBase" id="C27A2.1"/>
    </source>
</evidence>
<proteinExistence type="evidence at protein level"/>
<gene>
    <name evidence="10" type="primary">smc-5</name>
    <name evidence="10" type="ORF">C27A2.1</name>
</gene>
<protein>
    <recommendedName>
        <fullName evidence="8">Structural maintenance of chromosomes protein 5</fullName>
    </recommendedName>
</protein>
<sequence>MASQDSDEALPANYKDYPDGSLLRVVFHNFLTYEHTSFLPTASLNMILGHNGSGKSSIICGICLACGGSPKSLGRSERIVEYIRHGCTEGYVEIAIADKQKGPQVVRLTIRVGEQPKYRLNDSATTQSEIADLRKHYNIQIDNPCAFLAQDKVKSFSEQSSIELLRNTEKAASADLDQQHIDLMKQREDSTSIEDKCTTSENAIKRLEDEIGKIMPLVENYRKKLALQSKLRLLEKKMKIMEFEKFDREYKAELQNMDGAMIEYREVEKSIAECEKHRKNLEDRIKKDRSQISQMQRSCNEILAKVQEKGDKKLMEDMMQRAKAKLESAKKAADQHEKDVEKARKMIDQARARLQEAVDTLNGYEEFQSEMKSLEQKYSTAERDSRQEEDAIQKKSYEMRQLENKKRDEEQNSQLNRQDRYRVLQNFSSDASKAYRWYQQNRSQFKGDVYMPIMDMVLKTPEAAKALENSVGVRDRTMFVCCYKEDELLINGKQHSWRINTSVVPAEKIYSEDIDAQLPSELSRLGFKYLVSNCFDAPAPLKQFLCNVSGLNRIPFGGSDVEKKIAEVSQAIEQTRYSVFLTANIRCQNSKSRYANNTLQSQSATREANTWRDQFFKVSPVAKRTDNSILEEIQKLKAEIDIRSEQLREKRGAIQKERDVLRQEQMQWKSKKQVHTKWKTELASEMAKLEALENEVVDISAIEEEYANVEKKAILETKKMLENSIRWHKEIIDKHRLIGIFELSESICKSRVNKSNSEAETHRSKLEDLKSVKDAAEDLLKTALNHKKAAASALMKECSLKTLDESKMSPAENKIYSSLVKMFEEADVPTDMNTLDQAITSEKTRLKLAEDSGEDGSIVHEQRLKVLDDDLVLEKTRQEKLIENRARIHDKLGDEINNWRKEVETMIEQINVNYVQFFDSLGCRGEVSLEVPENPLDIEKYGIMIMVCFRKGESMKRLDNKVQSGGERSVATMLYLLALQQLCPVPFRCIDEINQGMDPTNERKVFDIMVGMWNGTTGTLSKTQYFLLSPKLLHGLDMRENVNIVMVNSTLTNSHGKHYDTSAKIDATFAKMGISA</sequence>
<organism evidence="9">
    <name type="scientific">Caenorhabditis elegans</name>
    <dbReference type="NCBI Taxonomy" id="6239"/>
    <lineage>
        <taxon>Eukaryota</taxon>
        <taxon>Metazoa</taxon>
        <taxon>Ecdysozoa</taxon>
        <taxon>Nematoda</taxon>
        <taxon>Chromadorea</taxon>
        <taxon>Rhabditida</taxon>
        <taxon>Rhabditina</taxon>
        <taxon>Rhabditomorpha</taxon>
        <taxon>Rhabditoidea</taxon>
        <taxon>Rhabditidae</taxon>
        <taxon>Peloderinae</taxon>
        <taxon>Caenorhabditis</taxon>
    </lineage>
</organism>
<accession>Q18237</accession>
<name>SMC5_CAEEL</name>
<dbReference type="EMBL" id="BX284602">
    <property type="protein sequence ID" value="CCD63066.1"/>
    <property type="molecule type" value="Genomic_DNA"/>
</dbReference>
<dbReference type="RefSeq" id="NP_494935.1">
    <property type="nucleotide sequence ID" value="NM_062534.5"/>
</dbReference>
<dbReference type="SMR" id="Q18237"/>
<dbReference type="FunCoup" id="Q18237">
    <property type="interactions" value="3141"/>
</dbReference>
<dbReference type="STRING" id="6239.C27A2.1.1"/>
<dbReference type="PaxDb" id="6239-C27A2.1"/>
<dbReference type="PeptideAtlas" id="Q18237"/>
<dbReference type="EnsemblMetazoa" id="C27A2.1.1">
    <property type="protein sequence ID" value="C27A2.1.1"/>
    <property type="gene ID" value="WBGene00016151"/>
</dbReference>
<dbReference type="GeneID" id="173874"/>
<dbReference type="KEGG" id="cel:CELE_C27A2.1"/>
<dbReference type="UCSC" id="C27A2.1">
    <property type="organism name" value="c. elegans"/>
</dbReference>
<dbReference type="AGR" id="WB:WBGene00016151"/>
<dbReference type="CTD" id="173874"/>
<dbReference type="WormBase" id="C27A2.1">
    <property type="protein sequence ID" value="CE27096"/>
    <property type="gene ID" value="WBGene00016151"/>
    <property type="gene designation" value="smc-5"/>
</dbReference>
<dbReference type="eggNOG" id="KOG0979">
    <property type="taxonomic scope" value="Eukaryota"/>
</dbReference>
<dbReference type="GeneTree" id="ENSGT00550000074816"/>
<dbReference type="HOGENOM" id="CLU_004969_1_0_1"/>
<dbReference type="InParanoid" id="Q18237"/>
<dbReference type="OMA" id="RFWTSQP"/>
<dbReference type="OrthoDB" id="10254973at2759"/>
<dbReference type="PhylomeDB" id="Q18237"/>
<dbReference type="Reactome" id="R-CEL-3108214">
    <property type="pathway name" value="SUMOylation of DNA damage response and repair proteins"/>
</dbReference>
<dbReference type="PRO" id="PR:Q18237"/>
<dbReference type="Proteomes" id="UP000001940">
    <property type="component" value="Chromosome II"/>
</dbReference>
<dbReference type="Bgee" id="WBGene00016151">
    <property type="expression patterns" value="Expressed in adult organism and 4 other cell types or tissues"/>
</dbReference>
<dbReference type="GO" id="GO:0000794">
    <property type="term" value="C:condensed nuclear chromosome"/>
    <property type="evidence" value="ECO:0000314"/>
    <property type="project" value="WormBase"/>
</dbReference>
<dbReference type="GO" id="GO:0005634">
    <property type="term" value="C:nucleus"/>
    <property type="evidence" value="ECO:0000318"/>
    <property type="project" value="GO_Central"/>
</dbReference>
<dbReference type="GO" id="GO:0030915">
    <property type="term" value="C:Smc5-Smc6 complex"/>
    <property type="evidence" value="ECO:0000318"/>
    <property type="project" value="GO_Central"/>
</dbReference>
<dbReference type="GO" id="GO:0005524">
    <property type="term" value="F:ATP binding"/>
    <property type="evidence" value="ECO:0007669"/>
    <property type="project" value="UniProtKB-KW"/>
</dbReference>
<dbReference type="GO" id="GO:0003697">
    <property type="term" value="F:single-stranded DNA binding"/>
    <property type="evidence" value="ECO:0000318"/>
    <property type="project" value="GO_Central"/>
</dbReference>
<dbReference type="GO" id="GO:0006260">
    <property type="term" value="P:DNA replication"/>
    <property type="evidence" value="ECO:0007669"/>
    <property type="project" value="UniProtKB-KW"/>
</dbReference>
<dbReference type="GO" id="GO:0000724">
    <property type="term" value="P:double-strand break repair via homologous recombination"/>
    <property type="evidence" value="ECO:0000318"/>
    <property type="project" value="GO_Central"/>
</dbReference>
<dbReference type="GO" id="GO:0010705">
    <property type="term" value="P:meiotic DNA double-strand break processing involved in reciprocal meiotic recombination"/>
    <property type="evidence" value="ECO:0000316"/>
    <property type="project" value="WormBase"/>
</dbReference>
<dbReference type="Gene3D" id="3.40.50.300">
    <property type="entry name" value="P-loop containing nucleotide triphosphate hydrolases"/>
    <property type="match status" value="2"/>
</dbReference>
<dbReference type="InterPro" id="IPR027417">
    <property type="entry name" value="P-loop_NTPase"/>
</dbReference>
<dbReference type="InterPro" id="IPR003395">
    <property type="entry name" value="RecF/RecN/SMC_N"/>
</dbReference>
<dbReference type="PANTHER" id="PTHR45916">
    <property type="entry name" value="STRUCTURAL MAINTENANCE OF CHROMOSOMES PROTEIN 5"/>
    <property type="match status" value="1"/>
</dbReference>
<dbReference type="PANTHER" id="PTHR45916:SF1">
    <property type="entry name" value="STRUCTURAL MAINTENANCE OF CHROMOSOMES PROTEIN 5"/>
    <property type="match status" value="1"/>
</dbReference>
<dbReference type="Pfam" id="PF02463">
    <property type="entry name" value="SMC_N"/>
    <property type="match status" value="1"/>
</dbReference>
<dbReference type="SUPFAM" id="SSF52540">
    <property type="entry name" value="P-loop containing nucleoside triphosphate hydrolases"/>
    <property type="match status" value="1"/>
</dbReference>
<comment type="function">
    <text evidence="4 5 6 7">Core component of the smc-5/smc-6 complex (PubMed:20661436). Functions in DNA double strand break repair by promoting sister-chromatid homologous recombination during meiosis (PubMed:20661436, PubMed:24424777, PubMed:27010650, PubMed:27011106). Acts in a DNA repair pathway for removal of ionizing radiation- and ultraviolet (UV) radiation-induced DNA lesions that is distinct from classical nucleotide excision repair and the translesion synthesis pathway (PubMed:20661436, PubMed:24424777). Also involved in the recovery of stalled replication forks (PubMed:24424777).</text>
</comment>
<comment type="subunit">
    <text evidence="4">Interacts with smc-6.</text>
</comment>
<comment type="subcellular location">
    <subcellularLocation>
        <location evidence="4">Nucleus</location>
    </subcellularLocation>
    <subcellularLocation>
        <location evidence="4">Chromosome</location>
    </subcellularLocation>
    <text evidence="4">Localizes on chromosomes during diplotene and diakinesis in oocytes.</text>
</comment>
<comment type="tissue specificity">
    <text evidence="4">Expressed in the germline (at protein level).</text>
</comment>
<comment type="domain">
    <text evidence="8">The flexible hinge domain, which separates the large intramolecular coiled coil regions, allows the heterotypic interaction with the corresponding domain of smc-6, forming a V-shaped heterodimer.</text>
</comment>
<comment type="disruption phenotype">
    <text evidence="4 5 6 7">Reduced fecundity and transgenerational sterility (PubMed:20661436). Increased apoptosis in germ cells and hypersensitivity to ultraviolet and ionizing radiation and hydroxyurea-induced replication stress (PubMed:20661436, PubMed:24424777). Increased rad-51 foci in the mitotic and meiotic germline (PubMed:20661436, PubMed:24424777, PubMed:27010650). Chromosome fragmentation defects and unresolved diakinesis chromosomes in meiotic oocytes (PubMed:20661436, PubMed:27010650). Increased accumulation of homologous recombination intermediates during meiosis (PubMed:20661436, PubMed:27010650, PubMed:27011106). Impaired DNA replication in germ cells (PubMed:24424777). Accumulation of brd-1 and rmh-1 on chromosomes in mitotic germ cells (PubMed:24424777, PubMed:27011106). In a spo-11 mutant background, no accumulation of meiotic rad-51 foci and decrease in chromosome fragmentation (PubMed:20661436). In a him-3 mutant background, increase in rad-51 foci and chromosome fragmentation (PubMed:20661436). RNAi-mediated knockdown of syp-2 leads to an increase of chromosome fragmentation (PubMed:20661436). In a xpc-1 mutant background, increased ultraviolet sensitivity (PubMed:24424777). In a xpc-1 or csb-1 mutant background, enhanced ultraviolet-induced delay in somatic development (PubMed:24424777). In a rmh-1 mutant background, increased embryonic lethality and larval arrest (PubMed:27011106). In a him-6 mutant background, increased cross-over frequency, formation of chromatin bridges, defects in diakinetic chiasmata formation, aberrant distribution of the condensin II subunit hcp-6 and compromised chromosome segregation in meiosis, leading to embryonic lethality (PubMed:27010650).</text>
</comment>
<comment type="similarity">
    <text evidence="8">Belongs to the SMC family. SMC5 subfamily.</text>
</comment>